<feature type="chain" id="PRO_0000144979" description="Uncharacterized protein in tfuA 3'region">
    <location>
        <begin position="1"/>
        <end position="420"/>
    </location>
</feature>
<feature type="domain" description="YcaO" evidence="1">
    <location>
        <begin position="79"/>
        <end position="420"/>
    </location>
</feature>
<evidence type="ECO:0000255" key="1">
    <source>
        <dbReference type="PROSITE-ProRule" id="PRU00999"/>
    </source>
</evidence>
<organism>
    <name type="scientific">Rhizobium leguminosarum bv. trifolii</name>
    <dbReference type="NCBI Taxonomy" id="386"/>
    <lineage>
        <taxon>Bacteria</taxon>
        <taxon>Pseudomonadati</taxon>
        <taxon>Pseudomonadota</taxon>
        <taxon>Alphaproteobacteria</taxon>
        <taxon>Hyphomicrobiales</taxon>
        <taxon>Rhizobiaceae</taxon>
        <taxon>Rhizobium/Agrobacterium group</taxon>
        <taxon>Rhizobium</taxon>
    </lineage>
</organism>
<sequence>MSAFTDLETLAGDLKRSSAGVSDYHDRAVTPAQTFAAIRPHLRDFGITRVGLLTALDVLNIPVAFATRPNSHTLSVFQGKGIDNEAAMTSAAMEAVETRIAEIAPADLTQATVESMRAERAAMIDLDNVARCAPDEIGSRPIPWCSGLDILSGSSVFVPWWLVGLDHRGERPPGFEQSSDGLASGNTPSEAVLHGLCELVERDAWALTQLKSPERLKESRIDPASFGDAVIDVMTDRITRAGMKLLLLDMTTDIGIPAFLAVIMPGNLSDRVDARWSHVCGGCGCHPDPVRAALRAITEAAQSRLTAIAGSRDDFSPRIYQRLDRSAAMQQVVELCEGDGRMRPFQPRHHRKATIQETIGHIADRLVATGIEQIVVVPFPHPALPVSVVRVIVPGLEVDISGQYIQLGMRAVNTIRGAES</sequence>
<protein>
    <recommendedName>
        <fullName>Uncharacterized protein in tfuA 3'region</fullName>
    </recommendedName>
    <alternativeName>
        <fullName>ORF3</fullName>
    </alternativeName>
</protein>
<proteinExistence type="predicted"/>
<name>YTF3_RHILT</name>
<accession>Q52871</accession>
<reference key="1">
    <citation type="journal article" date="1996" name="J. Bacteriol.">
        <title>A newly discovered gene, tfuA, involved in the production of the ribosomally synthesized peptide antibiotic trifolitoxin.</title>
        <authorList>
            <person name="Breil B.T."/>
            <person name="Triplett E.W."/>
        </authorList>
    </citation>
    <scope>NUCLEOTIDE SEQUENCE [GENOMIC DNA]</scope>
    <source>
        <strain>T24</strain>
    </source>
</reference>
<dbReference type="EMBL" id="U39409">
    <property type="protein sequence ID" value="AAB17514.1"/>
    <property type="molecule type" value="Genomic_DNA"/>
</dbReference>
<dbReference type="SMR" id="Q52871"/>
<dbReference type="Gene3D" id="3.30.160.660">
    <property type="match status" value="1"/>
</dbReference>
<dbReference type="InterPro" id="IPR003776">
    <property type="entry name" value="YcaO-like_dom"/>
</dbReference>
<dbReference type="NCBIfam" id="TIGR00702">
    <property type="entry name" value="YcaO-type kinase domain"/>
    <property type="match status" value="1"/>
</dbReference>
<dbReference type="PANTHER" id="PTHR37809">
    <property type="entry name" value="RIBOSOMAL PROTEIN S12 METHYLTHIOTRANSFERASE ACCESSORY FACTOR YCAO"/>
    <property type="match status" value="1"/>
</dbReference>
<dbReference type="PANTHER" id="PTHR37809:SF1">
    <property type="entry name" value="RIBOSOMAL PROTEIN S12 METHYLTHIOTRANSFERASE ACCESSORY FACTOR YCAO"/>
    <property type="match status" value="1"/>
</dbReference>
<dbReference type="Pfam" id="PF02624">
    <property type="entry name" value="YcaO"/>
    <property type="match status" value="1"/>
</dbReference>
<dbReference type="PROSITE" id="PS51664">
    <property type="entry name" value="YCAO"/>
    <property type="match status" value="1"/>
</dbReference>